<name>UBC2_YEAST</name>
<feature type="chain" id="PRO_0000082540" description="Ubiquitin-conjugating enzyme E2 2">
    <location>
        <begin position="1"/>
        <end position="172"/>
    </location>
</feature>
<feature type="domain" description="UBC core" evidence="1">
    <location>
        <begin position="4"/>
        <end position="150"/>
    </location>
</feature>
<feature type="region of interest" description="Disordered" evidence="3">
    <location>
        <begin position="145"/>
        <end position="172"/>
    </location>
</feature>
<feature type="compositionally biased region" description="Acidic residues" evidence="3">
    <location>
        <begin position="151"/>
        <end position="172"/>
    </location>
</feature>
<feature type="active site" description="Glycyl thioester intermediate" evidence="1 20">
    <location>
        <position position="88"/>
    </location>
</feature>
<feature type="modified residue" description="Phosphoserine; by SGV1" evidence="14 30">
    <location>
        <position position="120"/>
    </location>
</feature>
<feature type="mutagenesis site" description="Prevents H3K4me3 formation." evidence="6 24">
    <location>
        <begin position="1"/>
        <end position="9"/>
    </location>
</feature>
<feature type="mutagenesis site" description="Loss of activity." evidence="6 17 20">
    <original>C</original>
    <variation>A</variation>
    <variation>V</variation>
    <location>
        <position position="88"/>
    </location>
</feature>
<feature type="mutagenesis site" description="Strongly reduced N-end rule-dependent protein degradation." evidence="20">
    <original>NV</original>
    <variation>AA</variation>
    <location>
        <begin position="123"/>
        <end position="124"/>
    </location>
</feature>
<feature type="helix" evidence="31">
    <location>
        <begin position="4"/>
        <end position="18"/>
    </location>
</feature>
<feature type="strand" evidence="31">
    <location>
        <begin position="24"/>
        <end position="29"/>
    </location>
</feature>
<feature type="strand" evidence="31">
    <location>
        <begin position="32"/>
        <end position="41"/>
    </location>
</feature>
<feature type="strand" evidence="32">
    <location>
        <begin position="44"/>
        <end position="46"/>
    </location>
</feature>
<feature type="turn" evidence="31">
    <location>
        <begin position="47"/>
        <end position="50"/>
    </location>
</feature>
<feature type="strand" evidence="31">
    <location>
        <begin position="52"/>
        <end position="58"/>
    </location>
</feature>
<feature type="turn" evidence="31">
    <location>
        <begin position="61"/>
        <end position="65"/>
    </location>
</feature>
<feature type="strand" evidence="31">
    <location>
        <begin position="69"/>
        <end position="74"/>
    </location>
</feature>
<feature type="strand" evidence="31">
    <location>
        <begin position="85"/>
        <end position="87"/>
    </location>
</feature>
<feature type="helix" evidence="31">
    <location>
        <begin position="90"/>
        <end position="92"/>
    </location>
</feature>
<feature type="turn" evidence="31">
    <location>
        <begin position="93"/>
        <end position="95"/>
    </location>
</feature>
<feature type="helix" evidence="31">
    <location>
        <begin position="102"/>
        <end position="114"/>
    </location>
</feature>
<feature type="helix" evidence="31">
    <location>
        <begin position="124"/>
        <end position="132"/>
    </location>
</feature>
<feature type="helix" evidence="31">
    <location>
        <begin position="134"/>
        <end position="149"/>
    </location>
</feature>
<organism>
    <name type="scientific">Saccharomyces cerevisiae (strain ATCC 204508 / S288c)</name>
    <name type="common">Baker's yeast</name>
    <dbReference type="NCBI Taxonomy" id="559292"/>
    <lineage>
        <taxon>Eukaryota</taxon>
        <taxon>Fungi</taxon>
        <taxon>Dikarya</taxon>
        <taxon>Ascomycota</taxon>
        <taxon>Saccharomycotina</taxon>
        <taxon>Saccharomycetes</taxon>
        <taxon>Saccharomycetales</taxon>
        <taxon>Saccharomycetaceae</taxon>
        <taxon>Saccharomyces</taxon>
    </lineage>
</organism>
<reference key="1">
    <citation type="journal article" date="1985" name="Proc. Natl. Acad. Sci. U.S.A.">
        <title>RAD6 gene of Saccharomyces cerevisiae encodes a protein containing a tract of 13 consecutive aspartates.</title>
        <authorList>
            <person name="Reynolds P."/>
            <person name="Weber S."/>
            <person name="Prakash L."/>
        </authorList>
    </citation>
    <scope>NUCLEOTIDE SEQUENCE [GENOMIC DNA]</scope>
    <scope>FUNCTION</scope>
</reference>
<reference key="2">
    <citation type="journal article" date="1997" name="Yeast">
        <title>The characterization of two new clusters of duplicated genes suggests a 'Lego' organization of the yeast Saccharomyces cerevisiae chromosomes.</title>
        <authorList>
            <person name="Feuermann M."/>
            <person name="de Montigny J."/>
            <person name="Potier S."/>
            <person name="Souciet J.-L."/>
        </authorList>
    </citation>
    <scope>NUCLEOTIDE SEQUENCE [GENOMIC DNA]</scope>
    <source>
        <strain>ATCC 204508 / S288c</strain>
    </source>
</reference>
<reference key="3">
    <citation type="journal article" date="1997" name="Nature">
        <title>The nucleotide sequence of Saccharomyces cerevisiae chromosome VII.</title>
        <authorList>
            <person name="Tettelin H."/>
            <person name="Agostoni-Carbone M.L."/>
            <person name="Albermann K."/>
            <person name="Albers M."/>
            <person name="Arroyo J."/>
            <person name="Backes U."/>
            <person name="Barreiros T."/>
            <person name="Bertani I."/>
            <person name="Bjourson A.J."/>
            <person name="Brueckner M."/>
            <person name="Bruschi C.V."/>
            <person name="Carignani G."/>
            <person name="Castagnoli L."/>
            <person name="Cerdan E."/>
            <person name="Clemente M.L."/>
            <person name="Coblenz A."/>
            <person name="Coglievina M."/>
            <person name="Coissac E."/>
            <person name="Defoor E."/>
            <person name="Del Bino S."/>
            <person name="Delius H."/>
            <person name="Delneri D."/>
            <person name="de Wergifosse P."/>
            <person name="Dujon B."/>
            <person name="Durand P."/>
            <person name="Entian K.-D."/>
            <person name="Eraso P."/>
            <person name="Escribano V."/>
            <person name="Fabiani L."/>
            <person name="Fartmann B."/>
            <person name="Feroli F."/>
            <person name="Feuermann M."/>
            <person name="Frontali L."/>
            <person name="Garcia-Gonzalez M."/>
            <person name="Garcia-Saez M.I."/>
            <person name="Goffeau A."/>
            <person name="Guerreiro P."/>
            <person name="Hani J."/>
            <person name="Hansen M."/>
            <person name="Hebling U."/>
            <person name="Hernandez K."/>
            <person name="Heumann K."/>
            <person name="Hilger F."/>
            <person name="Hofmann B."/>
            <person name="Indge K.J."/>
            <person name="James C.M."/>
            <person name="Klima R."/>
            <person name="Koetter P."/>
            <person name="Kramer B."/>
            <person name="Kramer W."/>
            <person name="Lauquin G."/>
            <person name="Leuther H."/>
            <person name="Louis E.J."/>
            <person name="Maillier E."/>
            <person name="Marconi A."/>
            <person name="Martegani E."/>
            <person name="Mazon M.J."/>
            <person name="Mazzoni C."/>
            <person name="McReynolds A.D.K."/>
            <person name="Melchioretto P."/>
            <person name="Mewes H.-W."/>
            <person name="Minenkova O."/>
            <person name="Mueller-Auer S."/>
            <person name="Nawrocki A."/>
            <person name="Netter P."/>
            <person name="Neu R."/>
            <person name="Nombela C."/>
            <person name="Oliver S.G."/>
            <person name="Panzeri L."/>
            <person name="Paoluzi S."/>
            <person name="Plevani P."/>
            <person name="Portetelle D."/>
            <person name="Portillo F."/>
            <person name="Potier S."/>
            <person name="Purnelle B."/>
            <person name="Rieger M."/>
            <person name="Riles L."/>
            <person name="Rinaldi T."/>
            <person name="Robben J."/>
            <person name="Rodrigues-Pousada C."/>
            <person name="Rodriguez-Belmonte E."/>
            <person name="Rodriguez-Torres A.M."/>
            <person name="Rose M."/>
            <person name="Ruzzi M."/>
            <person name="Saliola M."/>
            <person name="Sanchez-Perez M."/>
            <person name="Schaefer B."/>
            <person name="Schaefer M."/>
            <person name="Scharfe M."/>
            <person name="Schmidheini T."/>
            <person name="Schreer A."/>
            <person name="Skala J."/>
            <person name="Souciet J.-L."/>
            <person name="Steensma H.Y."/>
            <person name="Talla E."/>
            <person name="Thierry A."/>
            <person name="Vandenbol M."/>
            <person name="van der Aart Q.J.M."/>
            <person name="Van Dyck L."/>
            <person name="Vanoni M."/>
            <person name="Verhasselt P."/>
            <person name="Voet M."/>
            <person name="Volckaert G."/>
            <person name="Wambutt R."/>
            <person name="Watson M.D."/>
            <person name="Weber N."/>
            <person name="Wedler E."/>
            <person name="Wedler H."/>
            <person name="Wipfli P."/>
            <person name="Wolf K."/>
            <person name="Wright L.F."/>
            <person name="Zaccaria P."/>
            <person name="Zimmermann M."/>
            <person name="Zollner A."/>
            <person name="Kleine K."/>
        </authorList>
    </citation>
    <scope>NUCLEOTIDE SEQUENCE [LARGE SCALE GENOMIC DNA]</scope>
    <source>
        <strain>ATCC 204508 / S288c</strain>
    </source>
</reference>
<reference key="4">
    <citation type="journal article" date="2014" name="G3 (Bethesda)">
        <title>The reference genome sequence of Saccharomyces cerevisiae: Then and now.</title>
        <authorList>
            <person name="Engel S.R."/>
            <person name="Dietrich F.S."/>
            <person name="Fisk D.G."/>
            <person name="Binkley G."/>
            <person name="Balakrishnan R."/>
            <person name="Costanzo M.C."/>
            <person name="Dwight S.S."/>
            <person name="Hitz B.C."/>
            <person name="Karra K."/>
            <person name="Nash R.S."/>
            <person name="Weng S."/>
            <person name="Wong E.D."/>
            <person name="Lloyd P."/>
            <person name="Skrzypek M.S."/>
            <person name="Miyasato S.R."/>
            <person name="Simison M."/>
            <person name="Cherry J.M."/>
        </authorList>
    </citation>
    <scope>GENOME REANNOTATION</scope>
    <source>
        <strain>ATCC 204508 / S288c</strain>
    </source>
</reference>
<reference key="5">
    <citation type="journal article" date="1987" name="Nature">
        <title>The yeast DNA repair gene RAD6 encodes a ubiquitin-conjugating enzyme.</title>
        <authorList>
            <person name="Jentsch S."/>
            <person name="McGrath J.P."/>
            <person name="Varshavsky A."/>
        </authorList>
    </citation>
    <scope>PROTEIN SEQUENCE OF 77-91</scope>
    <scope>FUNCTION</scope>
</reference>
<reference key="6">
    <citation type="journal article" date="1981" name="Mol. Gen. Genet.">
        <title>Recombination and mutagenesis in rad6 mutants of Saccharomyces cerevisiae: evidence for multiple functions of the RAD6 gene.</title>
        <authorList>
            <person name="Montelone B.A."/>
            <person name="Prakash S."/>
            <person name="Prakash L."/>
        </authorList>
    </citation>
    <scope>FUNCTION</scope>
</reference>
<reference key="7">
    <citation type="journal article" date="1990" name="Nucleic Acids Res.">
        <title>Expression of the Saccharomyces cerevisiae DNA repair gene RAD6 that encodes a ubiquitin conjugating enzyme, increases in response to DNA damage and in meiosis but remains constant during the mitotic cell cycle.</title>
        <authorList>
            <person name="Madura K."/>
            <person name="Prakash S."/>
            <person name="Prakash L."/>
        </authorList>
    </citation>
    <scope>INDUCTION</scope>
</reference>
<reference key="8">
    <citation type="journal article" date="1990" name="Proc. Natl. Acad. Sci. U.S.A.">
        <title>Mutation of cysteine-88 in the Saccharomyces cerevisiae RAD6 protein abolishes its ubiquitin-conjugating activity and its various biological functions.</title>
        <authorList>
            <person name="Sung P."/>
            <person name="Prakash S."/>
            <person name="Prakash L."/>
        </authorList>
    </citation>
    <scope>FUNCTION</scope>
    <scope>MUTAGENESIS OF CYS-88</scope>
</reference>
<reference key="9">
    <citation type="journal article" date="1991" name="Proc. Natl. Acad. Sci. U.S.A.">
        <title>The N-end rule is mediated by the UBC2(RAD6) ubiquitin-conjugating enzyme.</title>
        <authorList>
            <person name="Dohmen R.J."/>
            <person name="Madura K."/>
            <person name="Bartel B."/>
            <person name="Varshavsky A."/>
        </authorList>
    </citation>
    <scope>FUNCTION</scope>
    <scope>INTERACTION WITH UBR1</scope>
</reference>
<reference key="10">
    <citation type="journal article" date="1991" name="EMBO J.">
        <title>Yeast RAD6 encoded ubiquitin conjugating enzyme mediates protein degradation dependent on the N-end-recognizing E3 enzyme.</title>
        <authorList>
            <person name="Sung P."/>
            <person name="Berleth E."/>
            <person name="Pickart C.M."/>
            <person name="Prakash S."/>
            <person name="Prakash L."/>
        </authorList>
    </citation>
    <scope>FUNCTION</scope>
</reference>
<reference key="11">
    <citation type="journal article" date="1993" name="Genes Dev.">
        <title>The extremely conserved amino terminus of RAD6 ubiquitin-conjugating enzyme is essential for amino-end rule-dependent protein degradation.</title>
        <authorList>
            <person name="Watkins J.F."/>
            <person name="Sung P."/>
            <person name="Prakash S."/>
            <person name="Prakash L."/>
        </authorList>
    </citation>
    <scope>FUNCTION</scope>
    <scope>SUBCELLULAR LOCATION</scope>
    <scope>INTERACTION WITH UBR1</scope>
    <scope>MUTAGENESIS OF 1-MET--LEU-9</scope>
</reference>
<reference key="12">
    <citation type="journal article" date="1994" name="Genes Dev.">
        <title>Specific complex formation between yeast RAD6 and RAD18 proteins: a potential mechanism for targeting RAD6 ubiquitin-conjugating activity to DNA damage sites.</title>
        <authorList>
            <person name="Bailly V."/>
            <person name="Lamb J."/>
            <person name="Sung P."/>
            <person name="Prakash S."/>
            <person name="Prakash L."/>
        </authorList>
    </citation>
    <scope>FUNCTION</scope>
    <scope>INTERACTION WITH RAD18 AND UBR1</scope>
</reference>
<reference key="13">
    <citation type="journal article" date="1997" name="J. Biol. Chem.">
        <title>Yeast DNA repair proteins Rad6 and Rad18 form a heterodimer that has ubiquitin conjugating, DNA binding, and ATP hydrolytic activities.</title>
        <authorList>
            <person name="Bailly V."/>
            <person name="Lauder S."/>
            <person name="Prakash S."/>
            <person name="Prakash L."/>
        </authorList>
    </citation>
    <scope>FUNCTION</scope>
    <scope>INTERACTION WITH RAD18</scope>
</reference>
<reference key="14">
    <citation type="journal article" date="1997" name="Mol. Cell. Biol.">
        <title>The ubiquitin-conjugating enzyme Rad6 (Ubc2) is required for silencing in Saccharomyces cerevisiae.</title>
        <authorList>
            <person name="Huang H."/>
            <person name="Kahana A."/>
            <person name="Gottschling D.E."/>
            <person name="Prakash L."/>
            <person name="Liebman S.W."/>
        </authorList>
    </citation>
    <scope>FUNCTION</scope>
</reference>
<reference key="15">
    <citation type="journal article" date="1999" name="EMBO J.">
        <title>The E2-E3 interaction in the N-end rule pathway: the RING-H2 finger of E3 is required for the synthesis of multiubiquitin chain.</title>
        <authorList>
            <person name="Xie Y."/>
            <person name="Varshavsky A."/>
        </authorList>
    </citation>
    <scope>INTERACTION WITH UBR1 AND UBR2</scope>
</reference>
<reference key="16">
    <citation type="journal article" date="2000" name="EMBO J.">
        <title>Two RING finger proteins mediate cooperation between ubiquitin-conjugating enzymes in DNA repair.</title>
        <authorList>
            <person name="Ulrich H.D."/>
            <person name="Jentsch S."/>
        </authorList>
    </citation>
    <scope>FUNCTION</scope>
    <scope>SUBCELLULAR LOCATION</scope>
</reference>
<reference key="17">
    <citation type="journal article" date="2002" name="Nature">
        <title>Ubiquitination of histone H2B regulates H3 methylation and gene silencing in yeast.</title>
        <authorList>
            <person name="Sun Z.-W."/>
            <person name="Allis C.D."/>
        </authorList>
    </citation>
    <scope>FUNCTION</scope>
    <scope>MUTAGENESIS OF CYS-88 AND 1-MET--LEU-9</scope>
</reference>
<reference key="18">
    <citation type="journal article" date="2002" name="Nature">
        <title>RAD6-dependent DNA repair is linked to modification of PCNA by ubiquitin and SUMO.</title>
        <authorList>
            <person name="Hoege C."/>
            <person name="Pfander B."/>
            <person name="Moldovan G.-L."/>
            <person name="Pyrowolakis G."/>
            <person name="Jentsch S."/>
        </authorList>
    </citation>
    <scope>FUNCTION</scope>
</reference>
<reference key="19">
    <citation type="journal article" date="2003" name="Nature">
        <title>Global analysis of protein localization in budding yeast.</title>
        <authorList>
            <person name="Huh W.-K."/>
            <person name="Falvo J.V."/>
            <person name="Gerke L.C."/>
            <person name="Carroll A.S."/>
            <person name="Howson R.W."/>
            <person name="Weissman J.S."/>
            <person name="O'Shea E.K."/>
        </authorList>
    </citation>
    <scope>SUBCELLULAR LOCATION [LARGE SCALE ANALYSIS]</scope>
</reference>
<reference key="20">
    <citation type="journal article" date="2003" name="Nature">
        <title>Global analysis of protein expression in yeast.</title>
        <authorList>
            <person name="Ghaemmaghami S."/>
            <person name="Huh W.-K."/>
            <person name="Bower K."/>
            <person name="Howson R.W."/>
            <person name="Belle A."/>
            <person name="Dephoure N."/>
            <person name="O'Shea E.K."/>
            <person name="Weissman J.S."/>
        </authorList>
    </citation>
    <scope>LEVEL OF PROTEIN EXPRESSION [LARGE SCALE ANALYSIS]</scope>
</reference>
<reference key="21">
    <citation type="journal article" date="2004" name="Genes Dev.">
        <title>Rad6 plays a role in transcriptional activation through ubiquitylation of histone H2B.</title>
        <authorList>
            <person name="Kao C.-F."/>
            <person name="Hillyer C."/>
            <person name="Tsukuda T."/>
            <person name="Henry K.W."/>
            <person name="Berger S.L."/>
            <person name="Osley M.A."/>
        </authorList>
    </citation>
    <scope>FUNCTION</scope>
</reference>
<reference key="22">
    <citation type="journal article" date="2004" name="Nucleic Acids Res.">
        <title>The post-replication repair RAD18 and RAD6 genes are involved in the prevention of spontaneous mutations caused by 7,8-dihydro-8-oxoguanine in Saccharomyces cerevisiae.</title>
        <authorList>
            <person name="de Padula M."/>
            <person name="Slezak G."/>
            <person name="Auffret van Der Kemp P."/>
            <person name="Boiteux S."/>
        </authorList>
    </citation>
    <scope>FUNCTION</scope>
</reference>
<reference key="23">
    <citation type="journal article" date="2005" name="Mol. Cell">
        <title>The Bur1/Bur2 complex is required for histone H2B monoubiquitination by Rad6/Bre1 and histone methylation by COMPASS.</title>
        <authorList>
            <person name="Wood A."/>
            <person name="Schneider J."/>
            <person name="Dover J."/>
            <person name="Johnston M."/>
            <person name="Shilatifard A."/>
        </authorList>
    </citation>
    <scope>FUNCTION</scope>
    <scope>PHOSPHORYLATION AT SER-120</scope>
</reference>
<reference key="24">
    <citation type="journal article" date="2005" name="Mol. Cell. Biol.">
        <title>Histone H2B ubiquitylation is associated with elongating RNA polymerase II.</title>
        <authorList>
            <person name="Xiao T."/>
            <person name="Kao C.-F."/>
            <person name="Krogan N.J."/>
            <person name="Sun Z.-W."/>
            <person name="Greenblatt J.F."/>
            <person name="Osley M.A."/>
            <person name="Strahl B.D."/>
        </authorList>
    </citation>
    <scope>FUNCTION</scope>
    <scope>INTERACTION WITH RTF1; PAF1 AND THE RNA POLYMERASE II HYPERPHOSPHORYLATED FORM</scope>
</reference>
<reference key="25">
    <citation type="journal article" date="2005" name="Proc. Natl. Acad. Sci. U.S.A.">
        <title>The error-free component of the RAD6/RAD18 DNA damage tolerance pathway of budding yeast employs sister-strand recombination.</title>
        <authorList>
            <person name="Zhang H."/>
            <person name="Lawrence C.W."/>
        </authorList>
    </citation>
    <scope>FUNCTION</scope>
</reference>
<reference key="26">
    <citation type="journal article" date="2008" name="Mol. Cell. Proteomics">
        <title>A multidimensional chromatography technology for in-depth phosphoproteome analysis.</title>
        <authorList>
            <person name="Albuquerque C.P."/>
            <person name="Smolka M.B."/>
            <person name="Payne S.H."/>
            <person name="Bafna V."/>
            <person name="Eng J."/>
            <person name="Zhou H."/>
        </authorList>
    </citation>
    <scope>PHOSPHORYLATION [LARGE SCALE ANALYSIS] AT SER-120</scope>
    <scope>IDENTIFICATION BY MASS SPECTROMETRY [LARGE SCALE ANALYSIS]</scope>
</reference>
<reference key="27">
    <citation type="journal article" date="1998" name="J. Biol. Chem.">
        <title>Crystal structure of the Saccharomyces cerevisiae ubiquitin-conjugating enzyme Rad6 at 2.6-A resolution.</title>
        <authorList>
            <person name="Worthylake D.K."/>
            <person name="Prakash S."/>
            <person name="Prakash L."/>
            <person name="Hill C.P."/>
        </authorList>
    </citation>
    <scope>X-RAY CRYSTALLOGRAPHY (2.6 ANGSTROMS)</scope>
</reference>
<reference evidence="28 29" key="28">
    <citation type="journal article" date="2021" name="Nature">
        <title>Structural insights into Ubr1-mediated N-degron polyubiquitination.</title>
        <authorList>
            <person name="Pan M."/>
            <person name="Zheng Q."/>
            <person name="Wang T."/>
            <person name="Liang L."/>
            <person name="Mao J."/>
            <person name="Zuo C."/>
            <person name="Ding R."/>
            <person name="Ai H."/>
            <person name="Xie Y."/>
            <person name="Si D."/>
            <person name="Yu Y."/>
            <person name="Liu L."/>
            <person name="Zhao M."/>
        </authorList>
    </citation>
    <scope>STRUCTURE BY ELECTRON MICROSCOPY (3.35 ANGSTROMS) IN COMPLEX WITH UBR1</scope>
    <scope>FUNCTION</scope>
    <scope>CATALYTIC ACTIVITY</scope>
    <scope>PATHWAY</scope>
    <scope>ACTIVE SITE</scope>
    <scope>MUTAGENESIS OF CYS-88 AND 123-ASN-VAL-124</scope>
</reference>
<evidence type="ECO:0000255" key="1">
    <source>
        <dbReference type="PROSITE-ProRule" id="PRU00388"/>
    </source>
</evidence>
<evidence type="ECO:0000255" key="2">
    <source>
        <dbReference type="PROSITE-ProRule" id="PRU10133"/>
    </source>
</evidence>
<evidence type="ECO:0000256" key="3">
    <source>
        <dbReference type="SAM" id="MobiDB-lite"/>
    </source>
</evidence>
<evidence type="ECO:0000269" key="4">
    <source>
    </source>
</evidence>
<evidence type="ECO:0000269" key="5">
    <source>
    </source>
</evidence>
<evidence type="ECO:0000269" key="6">
    <source>
    </source>
</evidence>
<evidence type="ECO:0000269" key="7">
    <source>
    </source>
</evidence>
<evidence type="ECO:0000269" key="8">
    <source>
    </source>
</evidence>
<evidence type="ECO:0000269" key="9">
    <source>
    </source>
</evidence>
<evidence type="ECO:0000269" key="10">
    <source>
    </source>
</evidence>
<evidence type="ECO:0000269" key="11">
    <source>
    </source>
</evidence>
<evidence type="ECO:0000269" key="12">
    <source>
    </source>
</evidence>
<evidence type="ECO:0000269" key="13">
    <source>
    </source>
</evidence>
<evidence type="ECO:0000269" key="14">
    <source>
    </source>
</evidence>
<evidence type="ECO:0000269" key="15">
    <source>
    </source>
</evidence>
<evidence type="ECO:0000269" key="16">
    <source>
    </source>
</evidence>
<evidence type="ECO:0000269" key="17">
    <source>
    </source>
</evidence>
<evidence type="ECO:0000269" key="18">
    <source>
    </source>
</evidence>
<evidence type="ECO:0000269" key="19">
    <source>
    </source>
</evidence>
<evidence type="ECO:0000269" key="20">
    <source>
    </source>
</evidence>
<evidence type="ECO:0000269" key="21">
    <source>
    </source>
</evidence>
<evidence type="ECO:0000269" key="22">
    <source>
    </source>
</evidence>
<evidence type="ECO:0000269" key="23">
    <source>
    </source>
</evidence>
<evidence type="ECO:0000269" key="24">
    <source>
    </source>
</evidence>
<evidence type="ECO:0000269" key="25">
    <source>
    </source>
</evidence>
<evidence type="ECO:0000269" key="26">
    <source>
    </source>
</evidence>
<evidence type="ECO:0000303" key="27">
    <source>
    </source>
</evidence>
<evidence type="ECO:0007744" key="28">
    <source>
        <dbReference type="PDB" id="7MEX"/>
    </source>
</evidence>
<evidence type="ECO:0007744" key="29">
    <source>
        <dbReference type="PDB" id="7MEY"/>
    </source>
</evidence>
<evidence type="ECO:0007744" key="30">
    <source>
    </source>
</evidence>
<evidence type="ECO:0007829" key="31">
    <source>
        <dbReference type="PDB" id="4R62"/>
    </source>
</evidence>
<evidence type="ECO:0007829" key="32">
    <source>
        <dbReference type="PDB" id="8IEG"/>
    </source>
</evidence>
<comment type="function">
    <text evidence="5 6 7 10 11 12 13 14 15 16 17 19 20 21 22 23 24 25 26">E2 ubiquitin-conjugating enzyme that accepts ubiquitin from the ubiquitin-activating enzyme E1 and transfers it to a E3 ubiquitin-protein ligase (PubMed:10880451, PubMed:12226657, PubMed:1651502, PubMed:2157209, PubMed:3306404, PubMed:34789879, PubMed:7038392, PubMed:7926769, PubMed:8436296, PubMed:9343433). In association with the E3 enzyme BRE1 and LGE1, it plays a role in transcription regulation by catalyzing the monoubiquitination of histone H2B to form H2BK123ub1 (PubMed:12077605, PubMed:14752010, PubMed:16307922). H2BK123ub1 gives a specific tag for epigenetic transcriptional activation, elongation by RNA polymerase II, telomeric silencing, and is also a prerequisite for H3K4me and H3K79me formation (PubMed:12077605, PubMed:14752010, PubMed:15632065, PubMed:16307922). In association with the E3 enzyme RAD18, it catalyzes the monoubiquitination of POL30 'Lys-164', involved in postreplication repair of UV-damaged DNA (PubMed:15388802, PubMed:15632065, PubMed:16247017, PubMed:7926769, PubMed:9287349). The RAD6/UBC2-RAD18 complex is also involved in prevention of spontaneous mutations caused by 7,8-dihydro-8-oxoguanine (PubMed:15388802, PubMed:16247017, PubMed:7926769, PubMed:9287349). In association with the E3 enzyme UBR1, is involved in N-end rule-dependent protein degradation (PubMed:1651502, PubMed:2065660, PubMed:34789879, PubMed:7926769, PubMed:8436296). Also involved in sporulation (PubMed:3881753).</text>
</comment>
<comment type="catalytic activity">
    <reaction evidence="1 2 20">
        <text>S-ubiquitinyl-[E1 ubiquitin-activating enzyme]-L-cysteine + [E2 ubiquitin-conjugating enzyme]-L-cysteine = [E1 ubiquitin-activating enzyme]-L-cysteine + S-ubiquitinyl-[E2 ubiquitin-conjugating enzyme]-L-cysteine.</text>
        <dbReference type="EC" id="2.3.2.23"/>
    </reaction>
</comment>
<comment type="pathway">
    <text evidence="1 20">Protein modification; protein ubiquitination.</text>
</comment>
<comment type="subunit">
    <text evidence="4 12 15 20 23 24 25">Forms a heterodimer complexes with the E3 enzymes BRE1, RAD18 and UBR1 (PubMed:10581257, PubMed:1651502, PubMed:34789879, PubMed:7926769, PubMed:8436296, PubMed:9287349). Also interacts with UBR2, RTF1, PAF1 and the RNA polymerase II hyperphosphorylated form (PubMed:10581257, PubMed:15632065). The interaction with RNA polymerase II is BRE1- and PAF1-dependent (PubMed:10581257, PubMed:15632065).</text>
</comment>
<comment type="interaction">
    <interactant intactId="EBI-19722">
        <id>P06104</id>
    </interactant>
    <interactant intactId="EBI-31563">
        <id>Q07457</id>
        <label>BRE1</label>
    </interactant>
    <organismsDiffer>false</organismsDiffer>
    <experiments>4</experiments>
</comment>
<comment type="interaction">
    <interactant intactId="EBI-19722">
        <id>P06104</id>
    </interactant>
    <interactant intactId="EBI-14659">
        <id>P10862</id>
        <label>RAD18</label>
    </interactant>
    <organismsDiffer>false</organismsDiffer>
    <experiments>5</experiments>
</comment>
<comment type="interaction">
    <interactant intactId="EBI-19722">
        <id>P06104</id>
    </interactant>
    <interactant intactId="EBI-19909">
        <id>P19812</id>
        <label>UBR1</label>
    </interactant>
    <organismsDiffer>false</organismsDiffer>
    <experiments>5</experiments>
</comment>
<comment type="interaction">
    <interactant intactId="EBI-19722">
        <id>P06104</id>
    </interactant>
    <interactant intactId="EBI-34338">
        <id>Q07963</id>
        <label>UBR2</label>
    </interactant>
    <organismsDiffer>false</organismsDiffer>
    <experiments>7</experiments>
</comment>
<comment type="subcellular location">
    <subcellularLocation>
        <location evidence="5 8 24">Cytoplasm</location>
    </subcellularLocation>
    <subcellularLocation>
        <location evidence="5 8 24">Nucleus</location>
    </subcellularLocation>
</comment>
<comment type="induction">
    <text evidence="18">Up-regulated by UV radiations and during meiosis.</text>
</comment>
<comment type="domain">
    <text>The acidic-tail domain of UBC2 mediates interaction with UBR1 and UBR2, and thus is important for polyubiquitination of histones. This domain is also important for sporulation.</text>
</comment>
<comment type="PTM">
    <text>The N-terminus is blocked.</text>
</comment>
<comment type="miscellaneous">
    <text evidence="9">Present with 2770 molecules/cell in log phase SD medium.</text>
</comment>
<comment type="similarity">
    <text evidence="1">Belongs to the ubiquitin-conjugating enzyme family.</text>
</comment>
<dbReference type="EC" id="2.3.2.23" evidence="20"/>
<dbReference type="EMBL" id="K02962">
    <property type="protein sequence ID" value="AAA34952.1"/>
    <property type="molecule type" value="Genomic_DNA"/>
</dbReference>
<dbReference type="EMBL" id="Z72580">
    <property type="protein sequence ID" value="CAA96761.1"/>
    <property type="molecule type" value="Genomic_DNA"/>
</dbReference>
<dbReference type="EMBL" id="BK006941">
    <property type="protein sequence ID" value="DAA08044.1"/>
    <property type="molecule type" value="Genomic_DNA"/>
</dbReference>
<dbReference type="PIR" id="A21906">
    <property type="entry name" value="A21906"/>
</dbReference>
<dbReference type="RefSeq" id="NP_011457.1">
    <property type="nucleotide sequence ID" value="NM_001180923.1"/>
</dbReference>
<dbReference type="PDB" id="1AYZ">
    <property type="method" value="X-ray"/>
    <property type="resolution" value="2.60 A"/>
    <property type="chains" value="A/B/C=1-172"/>
</dbReference>
<dbReference type="PDB" id="4R62">
    <property type="method" value="X-ray"/>
    <property type="resolution" value="2.28 A"/>
    <property type="chains" value="A=1-172"/>
</dbReference>
<dbReference type="PDB" id="7MEX">
    <property type="method" value="EM"/>
    <property type="resolution" value="3.35 A"/>
    <property type="chains" value="B=3-152"/>
</dbReference>
<dbReference type="PDB" id="7MEY">
    <property type="method" value="EM"/>
    <property type="resolution" value="3.67 A"/>
    <property type="chains" value="B=1-172"/>
</dbReference>
<dbReference type="PDB" id="7UV8">
    <property type="method" value="X-ray"/>
    <property type="resolution" value="2.70 A"/>
    <property type="chains" value="A=1-150"/>
</dbReference>
<dbReference type="PDB" id="7UVC">
    <property type="method" value="X-ray"/>
    <property type="resolution" value="3.05 A"/>
    <property type="chains" value="A=1-150"/>
</dbReference>
<dbReference type="PDB" id="8IEG">
    <property type="method" value="EM"/>
    <property type="resolution" value="3.44 A"/>
    <property type="chains" value="R=3-150"/>
</dbReference>
<dbReference type="PDBsum" id="1AYZ"/>
<dbReference type="PDBsum" id="4R62"/>
<dbReference type="PDBsum" id="7MEX"/>
<dbReference type="PDBsum" id="7MEY"/>
<dbReference type="PDBsum" id="7UV8"/>
<dbReference type="PDBsum" id="7UVC"/>
<dbReference type="PDBsum" id="8IEG"/>
<dbReference type="EMDB" id="EMD-23806"/>
<dbReference type="EMDB" id="EMD-23807"/>
<dbReference type="EMDB" id="EMD-35381"/>
<dbReference type="SASBDB" id="P06104"/>
<dbReference type="SMR" id="P06104"/>
<dbReference type="BioGRID" id="33189">
    <property type="interactions" value="428"/>
</dbReference>
<dbReference type="ComplexPortal" id="CPX-2902">
    <property type="entry name" value="RAD6-RAD18 ubiquitin ligase complex"/>
</dbReference>
<dbReference type="ComplexPortal" id="CPX-2910">
    <property type="entry name" value="BRE1-RAD6 ubiquitin ligase complex"/>
</dbReference>
<dbReference type="ComplexPortal" id="CPX-2918">
    <property type="entry name" value="UBR1-RAD6 ubiquitin ligase complex"/>
</dbReference>
<dbReference type="ComplexPortal" id="CPX-2935">
    <property type="entry name" value="RAD6-UBR2 ubiquitin ligase complex"/>
</dbReference>
<dbReference type="ComplexPortal" id="CPX-2937">
    <property type="entry name" value="MUB1-RAD6-UBR2 ubiquitin ligase complex"/>
</dbReference>
<dbReference type="DIP" id="DIP-1555N"/>
<dbReference type="FunCoup" id="P06104">
    <property type="interactions" value="972"/>
</dbReference>
<dbReference type="IntAct" id="P06104">
    <property type="interactions" value="13"/>
</dbReference>
<dbReference type="MINT" id="P06104"/>
<dbReference type="STRING" id="4932.YGL058W"/>
<dbReference type="iPTMnet" id="P06104"/>
<dbReference type="PaxDb" id="4932-YGL058W"/>
<dbReference type="PeptideAtlas" id="P06104"/>
<dbReference type="EnsemblFungi" id="YGL058W_mRNA">
    <property type="protein sequence ID" value="YGL058W"/>
    <property type="gene ID" value="YGL058W"/>
</dbReference>
<dbReference type="GeneID" id="852822"/>
<dbReference type="KEGG" id="sce:YGL058W"/>
<dbReference type="AGR" id="SGD:S000003026"/>
<dbReference type="SGD" id="S000003026">
    <property type="gene designation" value="RAD6"/>
</dbReference>
<dbReference type="VEuPathDB" id="FungiDB:YGL058W"/>
<dbReference type="eggNOG" id="KOG0419">
    <property type="taxonomic scope" value="Eukaryota"/>
</dbReference>
<dbReference type="GeneTree" id="ENSGT00940000174704"/>
<dbReference type="HOGENOM" id="CLU_030988_10_2_1"/>
<dbReference type="InParanoid" id="P06104"/>
<dbReference type="OMA" id="DHKSQYI"/>
<dbReference type="OrthoDB" id="9984419at2759"/>
<dbReference type="BioCyc" id="YEAST:G3O-30566-MONOMER"/>
<dbReference type="Reactome" id="R-SCE-8866652">
    <property type="pathway name" value="Synthesis of active ubiquitin: roles of E1 and E2 enzymes"/>
</dbReference>
<dbReference type="Reactome" id="R-SCE-8866654">
    <property type="pathway name" value="E3 ubiquitin ligases ubiquitinate target proteins"/>
</dbReference>
<dbReference type="Reactome" id="R-SCE-983168">
    <property type="pathway name" value="Antigen processing: Ubiquitination &amp; Proteasome degradation"/>
</dbReference>
<dbReference type="UniPathway" id="UPA00143"/>
<dbReference type="BioGRID-ORCS" id="852822">
    <property type="hits" value="5 hits in 10 CRISPR screens"/>
</dbReference>
<dbReference type="CD-CODE" id="4081D115">
    <property type="entry name" value="Synthetic Condensate 000341"/>
</dbReference>
<dbReference type="CD-CODE" id="D12D7489">
    <property type="entry name" value="Synthetic Condensate 000333"/>
</dbReference>
<dbReference type="EvolutionaryTrace" id="P06104"/>
<dbReference type="PRO" id="PR:P06104"/>
<dbReference type="Proteomes" id="UP000002311">
    <property type="component" value="Chromosome VII"/>
</dbReference>
<dbReference type="RNAct" id="P06104">
    <property type="molecule type" value="protein"/>
</dbReference>
<dbReference type="GO" id="GO:0000785">
    <property type="term" value="C:chromatin"/>
    <property type="evidence" value="ECO:0000314"/>
    <property type="project" value="SGD"/>
</dbReference>
<dbReference type="GO" id="GO:0000781">
    <property type="term" value="C:chromosome, telomeric region"/>
    <property type="evidence" value="ECO:0007669"/>
    <property type="project" value="GOC"/>
</dbReference>
<dbReference type="GO" id="GO:0005737">
    <property type="term" value="C:cytoplasm"/>
    <property type="evidence" value="ECO:0000314"/>
    <property type="project" value="SGD"/>
</dbReference>
<dbReference type="GO" id="GO:0033503">
    <property type="term" value="C:HULC complex"/>
    <property type="evidence" value="ECO:0000318"/>
    <property type="project" value="GO_Central"/>
</dbReference>
<dbReference type="GO" id="GO:1990304">
    <property type="term" value="C:MUB1-RAD6-UBR2 ubiquitin ligase complex"/>
    <property type="evidence" value="ECO:0000353"/>
    <property type="project" value="ComplexPortal"/>
</dbReference>
<dbReference type="GO" id="GO:0005634">
    <property type="term" value="C:nucleus"/>
    <property type="evidence" value="ECO:0000314"/>
    <property type="project" value="SGD"/>
</dbReference>
<dbReference type="GO" id="GO:0097505">
    <property type="term" value="C:Rad6-Rad18 complex"/>
    <property type="evidence" value="ECO:0000314"/>
    <property type="project" value="SGD"/>
</dbReference>
<dbReference type="GO" id="GO:1990305">
    <property type="term" value="C:RAD6-UBR2 ubiquitin ligase complex"/>
    <property type="evidence" value="ECO:0000353"/>
    <property type="project" value="ComplexPortal"/>
</dbReference>
<dbReference type="GO" id="GO:1990303">
    <property type="term" value="C:UBR1-RAD6 ubiquitin ligase complex"/>
    <property type="evidence" value="ECO:0000314"/>
    <property type="project" value="UniProtKB"/>
</dbReference>
<dbReference type="GO" id="GO:0005524">
    <property type="term" value="F:ATP binding"/>
    <property type="evidence" value="ECO:0007669"/>
    <property type="project" value="UniProtKB-KW"/>
</dbReference>
<dbReference type="GO" id="GO:0070628">
    <property type="term" value="F:proteasome binding"/>
    <property type="evidence" value="ECO:0000314"/>
    <property type="project" value="SGD"/>
</dbReference>
<dbReference type="GO" id="GO:0061631">
    <property type="term" value="F:ubiquitin conjugating enzyme activity"/>
    <property type="evidence" value="ECO:0000314"/>
    <property type="project" value="UniProtKB"/>
</dbReference>
<dbReference type="GO" id="GO:0004842">
    <property type="term" value="F:ubiquitin-protein transferase activity"/>
    <property type="evidence" value="ECO:0000314"/>
    <property type="project" value="SGD"/>
</dbReference>
<dbReference type="GO" id="GO:0034620">
    <property type="term" value="P:cellular response to unfolded protein"/>
    <property type="evidence" value="ECO:0000315"/>
    <property type="project" value="SGD"/>
</dbReference>
<dbReference type="GO" id="GO:0071629">
    <property type="term" value="P:cytoplasm protein quality control by the ubiquitin-proteasome system"/>
    <property type="evidence" value="ECO:0000314"/>
    <property type="project" value="UniProtKB"/>
</dbReference>
<dbReference type="GO" id="GO:0006281">
    <property type="term" value="P:DNA repair"/>
    <property type="evidence" value="ECO:0000318"/>
    <property type="project" value="GO_Central"/>
</dbReference>
<dbReference type="GO" id="GO:0006353">
    <property type="term" value="P:DNA-templated transcription termination"/>
    <property type="evidence" value="ECO:0000315"/>
    <property type="project" value="SGD"/>
</dbReference>
<dbReference type="GO" id="GO:0000724">
    <property type="term" value="P:double-strand break repair via homologous recombination"/>
    <property type="evidence" value="ECO:0000316"/>
    <property type="project" value="SGD"/>
</dbReference>
<dbReference type="GO" id="GO:0036503">
    <property type="term" value="P:ERAD pathway"/>
    <property type="evidence" value="ECO:0000316"/>
    <property type="project" value="SGD"/>
</dbReference>
<dbReference type="GO" id="GO:0042275">
    <property type="term" value="P:error-free postreplication DNA repair"/>
    <property type="evidence" value="ECO:0000316"/>
    <property type="project" value="SGD"/>
</dbReference>
<dbReference type="GO" id="GO:0070987">
    <property type="term" value="P:error-free translesion synthesis"/>
    <property type="evidence" value="ECO:0000316"/>
    <property type="project" value="SGD"/>
</dbReference>
<dbReference type="GO" id="GO:0042276">
    <property type="term" value="P:error-prone translesion synthesis"/>
    <property type="evidence" value="ECO:0000316"/>
    <property type="project" value="SGD"/>
</dbReference>
<dbReference type="GO" id="GO:0042138">
    <property type="term" value="P:meiotic DNA double-strand break formation"/>
    <property type="evidence" value="ECO:0000315"/>
    <property type="project" value="SGD"/>
</dbReference>
<dbReference type="GO" id="GO:0031571">
    <property type="term" value="P:mitotic G1 DNA damage checkpoint signaling"/>
    <property type="evidence" value="ECO:0000315"/>
    <property type="project" value="SGD"/>
</dbReference>
<dbReference type="GO" id="GO:0043161">
    <property type="term" value="P:proteasome-mediated ubiquitin-dependent protein catabolic process"/>
    <property type="evidence" value="ECO:0000318"/>
    <property type="project" value="GO_Central"/>
</dbReference>
<dbReference type="GO" id="GO:0000209">
    <property type="term" value="P:protein polyubiquitination"/>
    <property type="evidence" value="ECO:0000318"/>
    <property type="project" value="GO_Central"/>
</dbReference>
<dbReference type="GO" id="GO:0016567">
    <property type="term" value="P:protein ubiquitination"/>
    <property type="evidence" value="ECO:0000314"/>
    <property type="project" value="ComplexPortal"/>
</dbReference>
<dbReference type="GO" id="GO:0090089">
    <property type="term" value="P:regulation of dipeptide transport"/>
    <property type="evidence" value="ECO:0000315"/>
    <property type="project" value="SGD"/>
</dbReference>
<dbReference type="GO" id="GO:0009302">
    <property type="term" value="P:sno(s)RNA transcription"/>
    <property type="evidence" value="ECO:0000315"/>
    <property type="project" value="SGD"/>
</dbReference>
<dbReference type="GO" id="GO:0030435">
    <property type="term" value="P:sporulation resulting in formation of a cellular spore"/>
    <property type="evidence" value="ECO:0007669"/>
    <property type="project" value="UniProtKB-KW"/>
</dbReference>
<dbReference type="GO" id="GO:0120174">
    <property type="term" value="P:stress-induced homeostatically regulated protein degradation pathway"/>
    <property type="evidence" value="ECO:0000315"/>
    <property type="project" value="SGD"/>
</dbReference>
<dbReference type="GO" id="GO:0031509">
    <property type="term" value="P:subtelomeric heterochromatin formation"/>
    <property type="evidence" value="ECO:0000315"/>
    <property type="project" value="SGD"/>
</dbReference>
<dbReference type="GO" id="GO:0000722">
    <property type="term" value="P:telomere maintenance via recombination"/>
    <property type="evidence" value="ECO:0000316"/>
    <property type="project" value="SGD"/>
</dbReference>
<dbReference type="GO" id="GO:0006366">
    <property type="term" value="P:transcription by RNA polymerase II"/>
    <property type="evidence" value="ECO:0000353"/>
    <property type="project" value="SGD"/>
</dbReference>
<dbReference type="GO" id="GO:0006511">
    <property type="term" value="P:ubiquitin-dependent protein catabolic process"/>
    <property type="evidence" value="ECO:0000315"/>
    <property type="project" value="SGD"/>
</dbReference>
<dbReference type="GO" id="GO:0071596">
    <property type="term" value="P:ubiquitin-dependent protein catabolic process via the N-end rule pathway"/>
    <property type="evidence" value="ECO:0000314"/>
    <property type="project" value="UniProtKB"/>
</dbReference>
<dbReference type="CDD" id="cd23790">
    <property type="entry name" value="UBCc_UBE2A_2B"/>
    <property type="match status" value="1"/>
</dbReference>
<dbReference type="FunFam" id="3.10.110.10:FF:000007">
    <property type="entry name" value="Ubiquitin-conjugating enzyme E2 2"/>
    <property type="match status" value="1"/>
</dbReference>
<dbReference type="Gene3D" id="3.10.110.10">
    <property type="entry name" value="Ubiquitin Conjugating Enzyme"/>
    <property type="match status" value="1"/>
</dbReference>
<dbReference type="InterPro" id="IPR050113">
    <property type="entry name" value="Ub_conjugating_enzyme"/>
</dbReference>
<dbReference type="InterPro" id="IPR000608">
    <property type="entry name" value="UBQ-conjugat_E2_core"/>
</dbReference>
<dbReference type="InterPro" id="IPR023313">
    <property type="entry name" value="UBQ-conjugating_AS"/>
</dbReference>
<dbReference type="InterPro" id="IPR016135">
    <property type="entry name" value="UBQ-conjugating_enzyme/RWD"/>
</dbReference>
<dbReference type="PANTHER" id="PTHR24067">
    <property type="entry name" value="UBIQUITIN-CONJUGATING ENZYME E2"/>
    <property type="match status" value="1"/>
</dbReference>
<dbReference type="Pfam" id="PF00179">
    <property type="entry name" value="UQ_con"/>
    <property type="match status" value="1"/>
</dbReference>
<dbReference type="SMART" id="SM00212">
    <property type="entry name" value="UBCc"/>
    <property type="match status" value="1"/>
</dbReference>
<dbReference type="SUPFAM" id="SSF54495">
    <property type="entry name" value="UBC-like"/>
    <property type="match status" value="1"/>
</dbReference>
<dbReference type="PROSITE" id="PS00183">
    <property type="entry name" value="UBC_1"/>
    <property type="match status" value="1"/>
</dbReference>
<dbReference type="PROSITE" id="PS50127">
    <property type="entry name" value="UBC_2"/>
    <property type="match status" value="1"/>
</dbReference>
<proteinExistence type="evidence at protein level"/>
<accession>P06104</accession>
<accession>D6VU83</accession>
<gene>
    <name type="primary">RAD6</name>
    <name evidence="27" type="synonym">UBC2</name>
    <name type="ordered locus">YGL058W</name>
</gene>
<keyword id="KW-0002">3D-structure</keyword>
<keyword id="KW-0067">ATP-binding</keyword>
<keyword id="KW-0156">Chromatin regulator</keyword>
<keyword id="KW-0963">Cytoplasm</keyword>
<keyword id="KW-0903">Direct protein sequencing</keyword>
<keyword id="KW-0227">DNA damage</keyword>
<keyword id="KW-0234">DNA repair</keyword>
<keyword id="KW-0547">Nucleotide-binding</keyword>
<keyword id="KW-0539">Nucleus</keyword>
<keyword id="KW-0597">Phosphoprotein</keyword>
<keyword id="KW-1185">Reference proteome</keyword>
<keyword id="KW-0749">Sporulation</keyword>
<keyword id="KW-0804">Transcription</keyword>
<keyword id="KW-0805">Transcription regulation</keyword>
<keyword id="KW-0808">Transferase</keyword>
<keyword id="KW-0833">Ubl conjugation pathway</keyword>
<sequence length="172" mass="19706">MSTPARRRLMRDFKRMKEDAPPGVSASPLPDNVMVWNAMIIGPADTPYEDGTFRLLLEFDEEYPNKPPHVKFLSEMFHPNVYANGEICLDILQNRWTPTYDVASILTSIQSLFNDPNPASPANVEAATLFKDHKSQYVKRVKETVEKSWEDDMDDMDDDDDDDDDDDDDEAD</sequence>
<protein>
    <recommendedName>
        <fullName>Ubiquitin-conjugating enzyme E2 2</fullName>
        <ecNumber evidence="20">2.3.2.23</ecNumber>
    </recommendedName>
    <alternativeName>
        <fullName>E2 ubiquitin-conjugating enzyme 2</fullName>
    </alternativeName>
    <alternativeName>
        <fullName>Radiation sensitivity protein 6</fullName>
    </alternativeName>
    <alternativeName>
        <fullName>Ubiquitin carrier protein UBC2</fullName>
    </alternativeName>
    <alternativeName>
        <fullName>Ubiquitin-protein ligase UBC2</fullName>
    </alternativeName>
</protein>